<gene>
    <name type="primary">ETR1</name>
    <name type="ordered locus">KLLA0F24552g</name>
</gene>
<organism>
    <name type="scientific">Kluyveromyces lactis (strain ATCC 8585 / CBS 2359 / DSM 70799 / NBRC 1267 / NRRL Y-1140 / WM37)</name>
    <name type="common">Yeast</name>
    <name type="synonym">Candida sphaerica</name>
    <dbReference type="NCBI Taxonomy" id="284590"/>
    <lineage>
        <taxon>Eukaryota</taxon>
        <taxon>Fungi</taxon>
        <taxon>Dikarya</taxon>
        <taxon>Ascomycota</taxon>
        <taxon>Saccharomycotina</taxon>
        <taxon>Saccharomycetes</taxon>
        <taxon>Saccharomycetales</taxon>
        <taxon>Saccharomycetaceae</taxon>
        <taxon>Kluyveromyces</taxon>
    </lineage>
</organism>
<comment type="function">
    <text evidence="2">Catalyzes the NADPH-dependent reduction of trans-2-enoyl thioesters in mitochondrial fatty acid synthesis (fatty acid synthesis type II). Fatty acid chain elongation in mitochondria uses acyl carrier protein (ACP) as an acyl group carrier, but the enzyme accepts both ACP and CoA thioesters as substrates in vitro. Required for respiration and the maintenance of the mitochondrial compartment.</text>
</comment>
<comment type="catalytic activity">
    <reaction evidence="2">
        <text>a 2,3-saturated acyl-[ACP] + NADP(+) = a (2E)-enoyl-[ACP] + NADPH + H(+)</text>
        <dbReference type="Rhea" id="RHEA:22564"/>
        <dbReference type="Rhea" id="RHEA-COMP:9925"/>
        <dbReference type="Rhea" id="RHEA-COMP:9926"/>
        <dbReference type="ChEBI" id="CHEBI:15378"/>
        <dbReference type="ChEBI" id="CHEBI:57783"/>
        <dbReference type="ChEBI" id="CHEBI:58349"/>
        <dbReference type="ChEBI" id="CHEBI:78784"/>
        <dbReference type="ChEBI" id="CHEBI:78785"/>
        <dbReference type="EC" id="1.3.1.104"/>
    </reaction>
</comment>
<comment type="subunit">
    <text evidence="3">Homodimer.</text>
</comment>
<comment type="subcellular location">
    <subcellularLocation>
        <location evidence="2">Mitochondrion matrix</location>
    </subcellularLocation>
</comment>
<comment type="similarity">
    <text evidence="5">Belongs to the zinc-containing alcohol dehydrogenase family. Quinone oxidoreductase subfamily.</text>
</comment>
<evidence type="ECO:0000250" key="1"/>
<evidence type="ECO:0000250" key="2">
    <source>
        <dbReference type="UniProtKB" id="P38071"/>
    </source>
</evidence>
<evidence type="ECO:0000250" key="3">
    <source>
        <dbReference type="UniProtKB" id="Q8WZM3"/>
    </source>
</evidence>
<evidence type="ECO:0000255" key="4"/>
<evidence type="ECO:0000305" key="5"/>
<keyword id="KW-0275">Fatty acid biosynthesis</keyword>
<keyword id="KW-0276">Fatty acid metabolism</keyword>
<keyword id="KW-0444">Lipid biosynthesis</keyword>
<keyword id="KW-0443">Lipid metabolism</keyword>
<keyword id="KW-0496">Mitochondrion</keyword>
<keyword id="KW-0521">NADP</keyword>
<keyword id="KW-0560">Oxidoreductase</keyword>
<keyword id="KW-1185">Reference proteome</keyword>
<keyword id="KW-0809">Transit peptide</keyword>
<accession>Q6CIR6</accession>
<dbReference type="EC" id="1.3.1.104"/>
<dbReference type="EMBL" id="CR382126">
    <property type="protein sequence ID" value="CAG98881.1"/>
    <property type="molecule type" value="Genomic_DNA"/>
</dbReference>
<dbReference type="RefSeq" id="XP_456173.1">
    <property type="nucleotide sequence ID" value="XM_456173.1"/>
</dbReference>
<dbReference type="SMR" id="Q6CIR6"/>
<dbReference type="FunCoup" id="Q6CIR6">
    <property type="interactions" value="729"/>
</dbReference>
<dbReference type="STRING" id="284590.Q6CIR6"/>
<dbReference type="PaxDb" id="284590-Q6CIR6"/>
<dbReference type="KEGG" id="kla:KLLA0_F24552g"/>
<dbReference type="eggNOG" id="KOG0025">
    <property type="taxonomic scope" value="Eukaryota"/>
</dbReference>
<dbReference type="HOGENOM" id="CLU_026673_17_0_1"/>
<dbReference type="InParanoid" id="Q6CIR6"/>
<dbReference type="OMA" id="YGYTQSK"/>
<dbReference type="Proteomes" id="UP000000598">
    <property type="component" value="Chromosome F"/>
</dbReference>
<dbReference type="GO" id="GO:0005759">
    <property type="term" value="C:mitochondrial matrix"/>
    <property type="evidence" value="ECO:0007669"/>
    <property type="project" value="UniProtKB-SubCell"/>
</dbReference>
<dbReference type="GO" id="GO:0141148">
    <property type="term" value="F:enoyl-[acyl-carrier-protein] reductase (NADPH) activity"/>
    <property type="evidence" value="ECO:0007669"/>
    <property type="project" value="UniProtKB-EC"/>
</dbReference>
<dbReference type="GO" id="GO:0006633">
    <property type="term" value="P:fatty acid biosynthetic process"/>
    <property type="evidence" value="ECO:0007669"/>
    <property type="project" value="UniProtKB-KW"/>
</dbReference>
<dbReference type="CDD" id="cd08290">
    <property type="entry name" value="ETR"/>
    <property type="match status" value="1"/>
</dbReference>
<dbReference type="FunFam" id="3.40.50.720:FF:000112">
    <property type="entry name" value="Enoyl-[acyl-carrier-protein] reductase 1, mitochondrial"/>
    <property type="match status" value="1"/>
</dbReference>
<dbReference type="Gene3D" id="3.90.180.10">
    <property type="entry name" value="Medium-chain alcohol dehydrogenases, catalytic domain"/>
    <property type="match status" value="1"/>
</dbReference>
<dbReference type="Gene3D" id="3.40.50.720">
    <property type="entry name" value="NAD(P)-binding Rossmann-like Domain"/>
    <property type="match status" value="1"/>
</dbReference>
<dbReference type="InterPro" id="IPR013154">
    <property type="entry name" value="ADH-like_N"/>
</dbReference>
<dbReference type="InterPro" id="IPR011032">
    <property type="entry name" value="GroES-like_sf"/>
</dbReference>
<dbReference type="InterPro" id="IPR051034">
    <property type="entry name" value="Mito_Enoyl-ACP_Reductase"/>
</dbReference>
<dbReference type="InterPro" id="IPR036291">
    <property type="entry name" value="NAD(P)-bd_dom_sf"/>
</dbReference>
<dbReference type="PANTHER" id="PTHR43981">
    <property type="entry name" value="ENOYL-[ACYL-CARRIER-PROTEIN] REDUCTASE, MITOCHONDRIAL"/>
    <property type="match status" value="1"/>
</dbReference>
<dbReference type="PANTHER" id="PTHR43981:SF2">
    <property type="entry name" value="ENOYL-[ACYL-CARRIER-PROTEIN] REDUCTASE, MITOCHONDRIAL"/>
    <property type="match status" value="1"/>
</dbReference>
<dbReference type="Pfam" id="PF08240">
    <property type="entry name" value="ADH_N"/>
    <property type="match status" value="1"/>
</dbReference>
<dbReference type="SUPFAM" id="SSF50129">
    <property type="entry name" value="GroES-like"/>
    <property type="match status" value="1"/>
</dbReference>
<dbReference type="SUPFAM" id="SSF51735">
    <property type="entry name" value="NAD(P)-binding Rossmann-fold domains"/>
    <property type="match status" value="1"/>
</dbReference>
<sequence>MSSFLSKRFLSFSQRAMSQESLKFKSLIYSSHDSQDCTKVLKVHNYKPKKGSETSIVLKTLAFPINPSDINQLEGVYPSKPDKVTDYSTDEPSAIAGNEGVFEVVSVPSSVSTLKPGDKVIPLQANFGTWSTYRTCDKESDLIKIEGVDIYTAATVAVNGCTAYQLVNDYINWDPKGNDWLVQNAGTSSVSKIVTQIAKAKNINTLSVIRDRENFEEVAEILEKKYGATKVISETENGEKEFGKEVLPKVLGSNAQVKLALNSVGGKSCANIARKLSKDGLMLTYGGMSKQPLTFPTGLFIFKGLKSHGFWVTENSKRDPENKIKTVNEVIELYRDGKIISPKEDIRALEWDVNNASDEEVLQLITDGIKTKGTKNMVILKW</sequence>
<reference key="1">
    <citation type="journal article" date="2004" name="Nature">
        <title>Genome evolution in yeasts.</title>
        <authorList>
            <person name="Dujon B."/>
            <person name="Sherman D."/>
            <person name="Fischer G."/>
            <person name="Durrens P."/>
            <person name="Casaregola S."/>
            <person name="Lafontaine I."/>
            <person name="de Montigny J."/>
            <person name="Marck C."/>
            <person name="Neuveglise C."/>
            <person name="Talla E."/>
            <person name="Goffard N."/>
            <person name="Frangeul L."/>
            <person name="Aigle M."/>
            <person name="Anthouard V."/>
            <person name="Babour A."/>
            <person name="Barbe V."/>
            <person name="Barnay S."/>
            <person name="Blanchin S."/>
            <person name="Beckerich J.-M."/>
            <person name="Beyne E."/>
            <person name="Bleykasten C."/>
            <person name="Boisrame A."/>
            <person name="Boyer J."/>
            <person name="Cattolico L."/>
            <person name="Confanioleri F."/>
            <person name="de Daruvar A."/>
            <person name="Despons L."/>
            <person name="Fabre E."/>
            <person name="Fairhead C."/>
            <person name="Ferry-Dumazet H."/>
            <person name="Groppi A."/>
            <person name="Hantraye F."/>
            <person name="Hennequin C."/>
            <person name="Jauniaux N."/>
            <person name="Joyet P."/>
            <person name="Kachouri R."/>
            <person name="Kerrest A."/>
            <person name="Koszul R."/>
            <person name="Lemaire M."/>
            <person name="Lesur I."/>
            <person name="Ma L."/>
            <person name="Muller H."/>
            <person name="Nicaud J.-M."/>
            <person name="Nikolski M."/>
            <person name="Oztas S."/>
            <person name="Ozier-Kalogeropoulos O."/>
            <person name="Pellenz S."/>
            <person name="Potier S."/>
            <person name="Richard G.-F."/>
            <person name="Straub M.-L."/>
            <person name="Suleau A."/>
            <person name="Swennen D."/>
            <person name="Tekaia F."/>
            <person name="Wesolowski-Louvel M."/>
            <person name="Westhof E."/>
            <person name="Wirth B."/>
            <person name="Zeniou-Meyer M."/>
            <person name="Zivanovic Y."/>
            <person name="Bolotin-Fukuhara M."/>
            <person name="Thierry A."/>
            <person name="Bouchier C."/>
            <person name="Caudron B."/>
            <person name="Scarpelli C."/>
            <person name="Gaillardin C."/>
            <person name="Weissenbach J."/>
            <person name="Wincker P."/>
            <person name="Souciet J.-L."/>
        </authorList>
    </citation>
    <scope>NUCLEOTIDE SEQUENCE [LARGE SCALE GENOMIC DNA]</scope>
    <source>
        <strain>ATCC 8585 / CBS 2359 / DSM 70799 / NBRC 1267 / NRRL Y-1140 / WM37</strain>
    </source>
</reference>
<protein>
    <recommendedName>
        <fullName>Enoyl-[acyl-carrier-protein] reductase, mitochondrial</fullName>
        <ecNumber>1.3.1.104</ecNumber>
    </recommendedName>
    <alternativeName>
        <fullName>2-enoyl thioester reductase</fullName>
    </alternativeName>
</protein>
<name>ETR1_KLULA</name>
<feature type="transit peptide" description="Mitochondrion" evidence="4">
    <location>
        <begin position="1"/>
        <end position="17"/>
    </location>
</feature>
<feature type="chain" id="PRO_0000000902" description="Enoyl-[acyl-carrier-protein] reductase, mitochondrial">
    <location>
        <begin position="18"/>
        <end position="382"/>
    </location>
</feature>
<feature type="active site" description="Proton donor" evidence="3">
    <location>
        <position position="77"/>
    </location>
</feature>
<feature type="binding site" evidence="3">
    <location>
        <position position="159"/>
    </location>
    <ligand>
        <name>NADP(+)</name>
        <dbReference type="ChEBI" id="CHEBI:58349"/>
    </ligand>
</feature>
<feature type="binding site" evidence="3">
    <location>
        <begin position="187"/>
        <end position="190"/>
    </location>
    <ligand>
        <name>NADP(+)</name>
        <dbReference type="ChEBI" id="CHEBI:58349"/>
    </ligand>
</feature>
<feature type="binding site" evidence="3">
    <location>
        <begin position="210"/>
        <end position="212"/>
    </location>
    <ligand>
        <name>NADP(+)</name>
        <dbReference type="ChEBI" id="CHEBI:58349"/>
    </ligand>
</feature>
<feature type="binding site" evidence="3">
    <location>
        <begin position="285"/>
        <end position="288"/>
    </location>
    <ligand>
        <name>NADP(+)</name>
        <dbReference type="ChEBI" id="CHEBI:58349"/>
    </ligand>
</feature>
<feature type="binding site" evidence="3">
    <location>
        <begin position="310"/>
        <end position="312"/>
    </location>
    <ligand>
        <name>NADP(+)</name>
        <dbReference type="ChEBI" id="CHEBI:58349"/>
    </ligand>
</feature>
<feature type="binding site" evidence="1">
    <location>
        <position position="375"/>
    </location>
    <ligand>
        <name>NADP(+)</name>
        <dbReference type="ChEBI" id="CHEBI:58349"/>
    </ligand>
</feature>
<proteinExistence type="inferred from homology"/>